<organism>
    <name type="scientific">Flavobacterium psychrophilum (strain ATCC 49511 / DSM 21280 / CIP 103535 / JIP02/86)</name>
    <dbReference type="NCBI Taxonomy" id="402612"/>
    <lineage>
        <taxon>Bacteria</taxon>
        <taxon>Pseudomonadati</taxon>
        <taxon>Bacteroidota</taxon>
        <taxon>Flavobacteriia</taxon>
        <taxon>Flavobacteriales</taxon>
        <taxon>Flavobacteriaceae</taxon>
        <taxon>Flavobacterium</taxon>
    </lineage>
</organism>
<keyword id="KW-0067">ATP-binding</keyword>
<keyword id="KW-0997">Cell inner membrane</keyword>
<keyword id="KW-1003">Cell membrane</keyword>
<keyword id="KW-0406">Ion transport</keyword>
<keyword id="KW-0472">Membrane</keyword>
<keyword id="KW-0547">Nucleotide-binding</keyword>
<keyword id="KW-0630">Potassium</keyword>
<keyword id="KW-0633">Potassium transport</keyword>
<keyword id="KW-1185">Reference proteome</keyword>
<keyword id="KW-0812">Transmembrane</keyword>
<keyword id="KW-1133">Transmembrane helix</keyword>
<keyword id="KW-0813">Transport</keyword>
<evidence type="ECO:0000255" key="1">
    <source>
        <dbReference type="HAMAP-Rule" id="MF_00276"/>
    </source>
</evidence>
<reference key="1">
    <citation type="journal article" date="2007" name="Nat. Biotechnol.">
        <title>Complete genome sequence of the fish pathogen Flavobacterium psychrophilum.</title>
        <authorList>
            <person name="Duchaud E."/>
            <person name="Boussaha M."/>
            <person name="Loux V."/>
            <person name="Bernardet J.-F."/>
            <person name="Michel C."/>
            <person name="Kerouault B."/>
            <person name="Mondot S."/>
            <person name="Nicolas P."/>
            <person name="Bossy R."/>
            <person name="Caron C."/>
            <person name="Bessieres P."/>
            <person name="Gibrat J.-F."/>
            <person name="Claverol S."/>
            <person name="Dumetz F."/>
            <person name="Le Henaff M."/>
            <person name="Benmansour A."/>
        </authorList>
    </citation>
    <scope>NUCLEOTIDE SEQUENCE [LARGE SCALE GENOMIC DNA]</scope>
    <source>
        <strain>ATCC 49511 / DSM 21280 / CIP 103535 / JIP02/86</strain>
    </source>
</reference>
<comment type="function">
    <text evidence="1">Part of the high-affinity ATP-driven potassium transport (or Kdp) system, which catalyzes the hydrolysis of ATP coupled with the electrogenic transport of potassium into the cytoplasm. This subunit acts as a catalytic chaperone that increases the ATP-binding affinity of the ATP-hydrolyzing subunit KdpB by the formation of a transient KdpB/KdpC/ATP ternary complex.</text>
</comment>
<comment type="subunit">
    <text evidence="1">The system is composed of three essential subunits: KdpA, KdpB and KdpC.</text>
</comment>
<comment type="subcellular location">
    <subcellularLocation>
        <location evidence="1">Cell inner membrane</location>
        <topology evidence="1">Single-pass membrane protein</topology>
    </subcellularLocation>
</comment>
<comment type="similarity">
    <text evidence="1">Belongs to the KdpC family.</text>
</comment>
<dbReference type="EMBL" id="AM398681">
    <property type="protein sequence ID" value="CAL43757.1"/>
    <property type="molecule type" value="Genomic_DNA"/>
</dbReference>
<dbReference type="RefSeq" id="WP_011963800.1">
    <property type="nucleotide sequence ID" value="NC_009613.3"/>
</dbReference>
<dbReference type="RefSeq" id="YP_001296564.1">
    <property type="nucleotide sequence ID" value="NC_009613.3"/>
</dbReference>
<dbReference type="SMR" id="A6H084"/>
<dbReference type="STRING" id="402612.FP1690"/>
<dbReference type="EnsemblBacteria" id="CAL43757">
    <property type="protein sequence ID" value="CAL43757"/>
    <property type="gene ID" value="FP1690"/>
</dbReference>
<dbReference type="KEGG" id="fps:FP1690"/>
<dbReference type="PATRIC" id="fig|402612.5.peg.1704"/>
<dbReference type="eggNOG" id="COG2156">
    <property type="taxonomic scope" value="Bacteria"/>
</dbReference>
<dbReference type="HOGENOM" id="CLU_077094_1_0_10"/>
<dbReference type="OrthoDB" id="9809491at2"/>
<dbReference type="Proteomes" id="UP000006394">
    <property type="component" value="Chromosome"/>
</dbReference>
<dbReference type="GO" id="GO:0005886">
    <property type="term" value="C:plasma membrane"/>
    <property type="evidence" value="ECO:0007669"/>
    <property type="project" value="UniProtKB-SubCell"/>
</dbReference>
<dbReference type="GO" id="GO:0005524">
    <property type="term" value="F:ATP binding"/>
    <property type="evidence" value="ECO:0007669"/>
    <property type="project" value="UniProtKB-UniRule"/>
</dbReference>
<dbReference type="GO" id="GO:0008556">
    <property type="term" value="F:P-type potassium transmembrane transporter activity"/>
    <property type="evidence" value="ECO:0007669"/>
    <property type="project" value="InterPro"/>
</dbReference>
<dbReference type="HAMAP" id="MF_00276">
    <property type="entry name" value="KdpC"/>
    <property type="match status" value="1"/>
</dbReference>
<dbReference type="InterPro" id="IPR003820">
    <property type="entry name" value="KdpC"/>
</dbReference>
<dbReference type="NCBIfam" id="TIGR00681">
    <property type="entry name" value="kdpC"/>
    <property type="match status" value="1"/>
</dbReference>
<dbReference type="NCBIfam" id="NF001454">
    <property type="entry name" value="PRK00315.1"/>
    <property type="match status" value="1"/>
</dbReference>
<dbReference type="NCBIfam" id="NF010606">
    <property type="entry name" value="PRK14002.1"/>
    <property type="match status" value="1"/>
</dbReference>
<dbReference type="PANTHER" id="PTHR30042">
    <property type="entry name" value="POTASSIUM-TRANSPORTING ATPASE C CHAIN"/>
    <property type="match status" value="1"/>
</dbReference>
<dbReference type="PANTHER" id="PTHR30042:SF2">
    <property type="entry name" value="POTASSIUM-TRANSPORTING ATPASE KDPC SUBUNIT"/>
    <property type="match status" value="1"/>
</dbReference>
<dbReference type="Pfam" id="PF02669">
    <property type="entry name" value="KdpC"/>
    <property type="match status" value="1"/>
</dbReference>
<dbReference type="PIRSF" id="PIRSF001296">
    <property type="entry name" value="K_ATPase_KdpC"/>
    <property type="match status" value="1"/>
</dbReference>
<accession>A6H084</accession>
<proteinExistence type="inferred from homology"/>
<feature type="chain" id="PRO_1000022285" description="Potassium-transporting ATPase KdpC subunit">
    <location>
        <begin position="1"/>
        <end position="184"/>
    </location>
</feature>
<feature type="transmembrane region" description="Helical" evidence="1">
    <location>
        <begin position="10"/>
        <end position="30"/>
    </location>
</feature>
<gene>
    <name evidence="1" type="primary">kdpC</name>
    <name type="ordered locus">FP1690</name>
</gene>
<name>KDPC_FLAPJ</name>
<protein>
    <recommendedName>
        <fullName evidence="1">Potassium-transporting ATPase KdpC subunit</fullName>
    </recommendedName>
    <alternativeName>
        <fullName evidence="1">ATP phosphohydrolase [potassium-transporting] C chain</fullName>
    </alternativeName>
    <alternativeName>
        <fullName evidence="1">Potassium-binding and translocating subunit C</fullName>
    </alternativeName>
    <alternativeName>
        <fullName evidence="1">Potassium-translocating ATPase C chain</fullName>
    </alternativeName>
</protein>
<sequence>MKNIFSILKLTFLMVVLFAVIYPLAIYGIAQFAPNKGKGETISVNEKVVGYQKIGQKFDQSNYFWGRPSAVDYNAAGSGGSNKAASNPDYLALVQKRIDTFLIAHPYLKKLEIPADMVTASGSGLDPNISPEGALIQVKRVAEVRKLSEEKVKALVENKINKPTLAGTSTVNVLELNVALDELK</sequence>